<dbReference type="EMBL" id="CP000671">
    <property type="protein sequence ID" value="ABQ98281.1"/>
    <property type="molecule type" value="Genomic_DNA"/>
</dbReference>
<dbReference type="SMR" id="A5UBY0"/>
<dbReference type="KEGG" id="hip:CGSHiEE_04410"/>
<dbReference type="HOGENOM" id="CLU_049853_0_0_6"/>
<dbReference type="GO" id="GO:0005737">
    <property type="term" value="C:cytoplasm"/>
    <property type="evidence" value="ECO:0007669"/>
    <property type="project" value="UniProtKB-UniRule"/>
</dbReference>
<dbReference type="GO" id="GO:0009295">
    <property type="term" value="C:nucleoid"/>
    <property type="evidence" value="ECO:0007669"/>
    <property type="project" value="UniProtKB-SubCell"/>
</dbReference>
<dbReference type="GO" id="GO:0005509">
    <property type="term" value="F:calcium ion binding"/>
    <property type="evidence" value="ECO:0007669"/>
    <property type="project" value="UniProtKB-UniRule"/>
</dbReference>
<dbReference type="GO" id="GO:0051301">
    <property type="term" value="P:cell division"/>
    <property type="evidence" value="ECO:0007669"/>
    <property type="project" value="UniProtKB-KW"/>
</dbReference>
<dbReference type="GO" id="GO:0030261">
    <property type="term" value="P:chromosome condensation"/>
    <property type="evidence" value="ECO:0007669"/>
    <property type="project" value="UniProtKB-KW"/>
</dbReference>
<dbReference type="GO" id="GO:0007059">
    <property type="term" value="P:chromosome segregation"/>
    <property type="evidence" value="ECO:0007669"/>
    <property type="project" value="UniProtKB-UniRule"/>
</dbReference>
<dbReference type="GO" id="GO:0006260">
    <property type="term" value="P:DNA replication"/>
    <property type="evidence" value="ECO:0007669"/>
    <property type="project" value="UniProtKB-UniRule"/>
</dbReference>
<dbReference type="CDD" id="cd16337">
    <property type="entry name" value="MukF_C"/>
    <property type="match status" value="1"/>
</dbReference>
<dbReference type="Gene3D" id="1.20.58.590">
    <property type="entry name" value="Chromosome partition protein MukF, middle domain"/>
    <property type="match status" value="1"/>
</dbReference>
<dbReference type="Gene3D" id="1.10.225.40">
    <property type="entry name" value="MukF, C-terminal domain"/>
    <property type="match status" value="1"/>
</dbReference>
<dbReference type="Gene3D" id="1.10.10.10">
    <property type="entry name" value="Winged helix-like DNA-binding domain superfamily/Winged helix DNA-binding domain"/>
    <property type="match status" value="1"/>
</dbReference>
<dbReference type="HAMAP" id="MF_01803">
    <property type="entry name" value="MukF"/>
    <property type="match status" value="1"/>
</dbReference>
<dbReference type="InterPro" id="IPR005582">
    <property type="entry name" value="Chromosome_partition_MukF"/>
</dbReference>
<dbReference type="InterPro" id="IPR033441">
    <property type="entry name" value="MukF_C"/>
</dbReference>
<dbReference type="InterPro" id="IPR038198">
    <property type="entry name" value="MukF_C_sf"/>
</dbReference>
<dbReference type="InterPro" id="IPR033440">
    <property type="entry name" value="MukF_M"/>
</dbReference>
<dbReference type="InterPro" id="IPR036141">
    <property type="entry name" value="MukF_M_sp"/>
</dbReference>
<dbReference type="InterPro" id="IPR033439">
    <property type="entry name" value="MukF_WHTH"/>
</dbReference>
<dbReference type="InterPro" id="IPR036388">
    <property type="entry name" value="WH-like_DNA-bd_sf"/>
</dbReference>
<dbReference type="InterPro" id="IPR036390">
    <property type="entry name" value="WH_DNA-bd_sf"/>
</dbReference>
<dbReference type="NCBIfam" id="NF003615">
    <property type="entry name" value="PRK05260.1"/>
    <property type="match status" value="1"/>
</dbReference>
<dbReference type="Pfam" id="PF03882">
    <property type="entry name" value="KicB"/>
    <property type="match status" value="1"/>
</dbReference>
<dbReference type="Pfam" id="PF17193">
    <property type="entry name" value="MukF_C"/>
    <property type="match status" value="1"/>
</dbReference>
<dbReference type="Pfam" id="PF17192">
    <property type="entry name" value="MukF_M"/>
    <property type="match status" value="1"/>
</dbReference>
<dbReference type="PIRSF" id="PIRSF018282">
    <property type="entry name" value="MukF"/>
    <property type="match status" value="1"/>
</dbReference>
<dbReference type="SUPFAM" id="SSF140570">
    <property type="entry name" value="MukF C-terminal domain-like"/>
    <property type="match status" value="1"/>
</dbReference>
<dbReference type="SUPFAM" id="SSF46785">
    <property type="entry name" value="Winged helix' DNA-binding domain"/>
    <property type="match status" value="1"/>
</dbReference>
<protein>
    <recommendedName>
        <fullName evidence="1">Chromosome partition protein MukF</fullName>
    </recommendedName>
</protein>
<evidence type="ECO:0000255" key="1">
    <source>
        <dbReference type="HAMAP-Rule" id="MF_01803"/>
    </source>
</evidence>
<organism>
    <name type="scientific">Haemophilus influenzae (strain PittEE)</name>
    <dbReference type="NCBI Taxonomy" id="374930"/>
    <lineage>
        <taxon>Bacteria</taxon>
        <taxon>Pseudomonadati</taxon>
        <taxon>Pseudomonadota</taxon>
        <taxon>Gammaproteobacteria</taxon>
        <taxon>Pasteurellales</taxon>
        <taxon>Pasteurellaceae</taxon>
        <taxon>Haemophilus</taxon>
    </lineage>
</organism>
<accession>A5UBY0</accession>
<comment type="function">
    <text evidence="1">Involved in chromosome condensation, segregation and cell cycle progression. May participate in facilitating chromosome segregation by condensation DNA from both sides of a centrally located replisome during cell division. Not required for mini-F plasmid partitioning. Probably acts via its interaction with MukB and MukE. Overexpression results in anucleate cells. It has a calcium binding activity.</text>
</comment>
<comment type="subunit">
    <text evidence="1">Interacts, and probably forms a ternary complex, with MukE and MukB via its C-terminal region. The complex formation is stimulated by calcium or magnesium. It is required for an interaction between MukE and MukB.</text>
</comment>
<comment type="subcellular location">
    <subcellularLocation>
        <location evidence="1">Cytoplasm</location>
        <location evidence="1">Nucleoid</location>
    </subcellularLocation>
    <text evidence="1">Restricted to the nucleoid region.</text>
</comment>
<comment type="similarity">
    <text evidence="1">Belongs to the MukF family.</text>
</comment>
<feature type="chain" id="PRO_1000069932" description="Chromosome partition protein MukF">
    <location>
        <begin position="1"/>
        <end position="444"/>
    </location>
</feature>
<feature type="region of interest" description="Leucine-zipper">
    <location>
        <begin position="212"/>
        <end position="240"/>
    </location>
</feature>
<gene>
    <name evidence="1" type="primary">mukF</name>
    <name type="ordered locus">CGSHiEE_04410</name>
</gene>
<proteinExistence type="inferred from homology"/>
<keyword id="KW-0106">Calcium</keyword>
<keyword id="KW-0131">Cell cycle</keyword>
<keyword id="KW-0132">Cell division</keyword>
<keyword id="KW-0159">Chromosome partition</keyword>
<keyword id="KW-0963">Cytoplasm</keyword>
<keyword id="KW-0226">DNA condensation</keyword>
<sequence length="444" mass="51607">MIETSQTIPELVSWAKDREFSLNLPTERLVFLLAIAIYNNERLDGEMLEADLVDIFRHTMNAFEQSTDAIATRANNAINELVKQRLLNRFSSEFTEGLAIYRLTPLGVGVSDYYIRQREFSALRLSVQLSIVADEIQRASDSAEEGVENNESEHYWRRNVFAPLKYSVAEIFDSIDLSQRIMDENQQSIKDEIAELLTKDWQAAISSCERLLDETSGNLRELQDTLNAAGDKLQAQLLRIQDCVIGRDDLYFIDQLITDLQSKLDRIISWGQQAIDLWIGYDRHVHKFIRTAIDMDKNRVFSQRLRNSIHNYFEHPWFLWTAQAERLVDLRDEEMVLREDDALGELPEELQYESLSDLHDQIVEHMQDLLIAYRENNRPIDLSLVLKEQLENYPLSRHFDVARIIVDQAVRLGMANDDLSGIYPDWQVINKRGAEVQAHVIDKY</sequence>
<name>MUKF_HAEIE</name>
<reference key="1">
    <citation type="journal article" date="2007" name="Genome Biol.">
        <title>Characterization and modeling of the Haemophilus influenzae core and supragenomes based on the complete genomic sequences of Rd and 12 clinical nontypeable strains.</title>
        <authorList>
            <person name="Hogg J.S."/>
            <person name="Hu F.Z."/>
            <person name="Janto B."/>
            <person name="Boissy R."/>
            <person name="Hayes J."/>
            <person name="Keefe R."/>
            <person name="Post J.C."/>
            <person name="Ehrlich G.D."/>
        </authorList>
    </citation>
    <scope>NUCLEOTIDE SEQUENCE [LARGE SCALE GENOMIC DNA]</scope>
    <source>
        <strain>PittEE</strain>
    </source>
</reference>